<protein>
    <recommendedName>
        <fullName>Putative tartrate transporter</fullName>
    </recommendedName>
</protein>
<feature type="chain" id="PRO_0000121389" description="Putative tartrate transporter">
    <location>
        <begin position="1"/>
        <end position="433"/>
    </location>
</feature>
<feature type="transmembrane region" description="Helical" evidence="1">
    <location>
        <begin position="17"/>
        <end position="37"/>
    </location>
</feature>
<feature type="transmembrane region" description="Helical" evidence="1">
    <location>
        <begin position="47"/>
        <end position="67"/>
    </location>
</feature>
<feature type="transmembrane region" description="Helical" evidence="1">
    <location>
        <begin position="82"/>
        <end position="102"/>
    </location>
</feature>
<feature type="transmembrane region" description="Helical" evidence="1">
    <location>
        <begin position="113"/>
        <end position="133"/>
    </location>
</feature>
<feature type="transmembrane region" description="Helical" evidence="1">
    <location>
        <begin position="139"/>
        <end position="159"/>
    </location>
</feature>
<feature type="transmembrane region" description="Helical" evidence="1">
    <location>
        <begin position="177"/>
        <end position="197"/>
    </location>
</feature>
<feature type="transmembrane region" description="Helical" evidence="1">
    <location>
        <begin position="242"/>
        <end position="262"/>
    </location>
</feature>
<feature type="transmembrane region" description="Helical" evidence="1">
    <location>
        <begin position="275"/>
        <end position="295"/>
    </location>
</feature>
<feature type="transmembrane region" description="Helical" evidence="1">
    <location>
        <begin position="314"/>
        <end position="334"/>
    </location>
</feature>
<feature type="transmembrane region" description="Helical" evidence="1">
    <location>
        <begin position="350"/>
        <end position="370"/>
    </location>
</feature>
<feature type="transmembrane region" description="Helical" evidence="1">
    <location>
        <begin position="395"/>
        <end position="415"/>
    </location>
</feature>
<reference key="1">
    <citation type="journal article" date="1995" name="J. Bacteriol.">
        <title>Sequence and mutational analysis of a tartrate utilization operon from Agrobacterium vitis.</title>
        <authorList>
            <person name="Crouzet P."/>
            <person name="Otten L."/>
        </authorList>
    </citation>
    <scope>NUCLEOTIDE SEQUENCE [GENOMIC DNA]</scope>
    <source>
        <strain>AB4</strain>
    </source>
</reference>
<accession>Q44470</accession>
<comment type="function">
    <text>Component of the tartrate utilization system and may allow entry of tartrate and tartrate dehydrogenase.</text>
</comment>
<comment type="subcellular location">
    <subcellularLocation>
        <location evidence="2">Cell membrane</location>
        <topology evidence="2">Multi-pass membrane protein</topology>
    </subcellularLocation>
</comment>
<comment type="induction">
    <text>By tartrate.</text>
</comment>
<comment type="similarity">
    <text evidence="2">Belongs to the major facilitator superfamily. Phthalate permease family.</text>
</comment>
<evidence type="ECO:0000255" key="1"/>
<evidence type="ECO:0000305" key="2"/>
<proteinExistence type="evidence at transcript level"/>
<name>TUB4_AGRVI</name>
<organism>
    <name type="scientific">Agrobacterium vitis</name>
    <name type="common">Rhizobium vitis</name>
    <dbReference type="NCBI Taxonomy" id="373"/>
    <lineage>
        <taxon>Bacteria</taxon>
        <taxon>Pseudomonadati</taxon>
        <taxon>Pseudomonadota</taxon>
        <taxon>Alphaproteobacteria</taxon>
        <taxon>Hyphomicrobiales</taxon>
        <taxon>Rhizobiaceae</taxon>
        <taxon>Rhizobium/Agrobacterium group</taxon>
        <taxon>Agrobacterium</taxon>
    </lineage>
</organism>
<gene>
    <name type="primary">ttuB</name>
</gene>
<keyword id="KW-1003">Cell membrane</keyword>
<keyword id="KW-0472">Membrane</keyword>
<keyword id="KW-0614">Plasmid</keyword>
<keyword id="KW-0812">Transmembrane</keyword>
<keyword id="KW-1133">Transmembrane helix</keyword>
<keyword id="KW-0813">Transport</keyword>
<geneLocation type="plasmid">
    <name>pTrAB4</name>
</geneLocation>
<dbReference type="EMBL" id="U25634">
    <property type="protein sequence ID" value="AAA68697.1"/>
    <property type="molecule type" value="Genomic_DNA"/>
</dbReference>
<dbReference type="RefSeq" id="WP_060719968.1">
    <property type="nucleotide sequence ID" value="NZ_CP118262.1"/>
</dbReference>
<dbReference type="SMR" id="Q44470"/>
<dbReference type="GeneID" id="60683901"/>
<dbReference type="OrthoDB" id="9773957at2"/>
<dbReference type="GO" id="GO:0005886">
    <property type="term" value="C:plasma membrane"/>
    <property type="evidence" value="ECO:0007669"/>
    <property type="project" value="UniProtKB-SubCell"/>
</dbReference>
<dbReference type="GO" id="GO:0022857">
    <property type="term" value="F:transmembrane transporter activity"/>
    <property type="evidence" value="ECO:0007669"/>
    <property type="project" value="InterPro"/>
</dbReference>
<dbReference type="CDD" id="cd17319">
    <property type="entry name" value="MFS_ExuT_GudP_like"/>
    <property type="match status" value="1"/>
</dbReference>
<dbReference type="FunFam" id="1.20.1250.20:FF:000018">
    <property type="entry name" value="MFS transporter permease"/>
    <property type="match status" value="1"/>
</dbReference>
<dbReference type="FunFam" id="1.20.1250.20:FF:000126">
    <property type="entry name" value="MFS transporter permease"/>
    <property type="match status" value="1"/>
</dbReference>
<dbReference type="Gene3D" id="1.20.1250.20">
    <property type="entry name" value="MFS general substrate transporter like domains"/>
    <property type="match status" value="2"/>
</dbReference>
<dbReference type="InterPro" id="IPR011701">
    <property type="entry name" value="MFS"/>
</dbReference>
<dbReference type="InterPro" id="IPR020846">
    <property type="entry name" value="MFS_dom"/>
</dbReference>
<dbReference type="InterPro" id="IPR036259">
    <property type="entry name" value="MFS_trans_sf"/>
</dbReference>
<dbReference type="NCBIfam" id="TIGR00893">
    <property type="entry name" value="2A0114"/>
    <property type="match status" value="1"/>
</dbReference>
<dbReference type="PANTHER" id="PTHR43791">
    <property type="entry name" value="PERMEASE-RELATED"/>
    <property type="match status" value="1"/>
</dbReference>
<dbReference type="PANTHER" id="PTHR43791:SF36">
    <property type="entry name" value="TRANSPORTER, PUTATIVE (AFU_ORTHOLOGUE AFUA_6G08340)-RELATED"/>
    <property type="match status" value="1"/>
</dbReference>
<dbReference type="Pfam" id="PF07690">
    <property type="entry name" value="MFS_1"/>
    <property type="match status" value="1"/>
</dbReference>
<dbReference type="SUPFAM" id="SSF103473">
    <property type="entry name" value="MFS general substrate transporter"/>
    <property type="match status" value="1"/>
</dbReference>
<dbReference type="PROSITE" id="PS50850">
    <property type="entry name" value="MFS"/>
    <property type="match status" value="1"/>
</dbReference>
<sequence length="433" mass="46253">MNSDLETRVLRKITLRIVPFIMLLYFVAFLDRVNIGFAALTMNEDLGFSSTVFGIGAGIFFVGYFLFEVPSNLILNKVGARIWIARVMITWGIVSGLMAFVQGTTSFYALRFLLGVAEAGFFPGIILYLSFWFPARRRAAVTAIFMAAAPLSTVLGSPISGALMEMHGFLGLAGWQWMFLIEAAPAVILGVVVLFYLTDRPEKAKWLSEDERNWLVKTMNAEQAAKGKASHSILAGLADIRVIALALVYFGTSAGLYTLGIWAPQIIKEFGLSSLQVGFINAVPGIFAVAAMVLWARHSDKTGERTWHVVGACLLAAVGLAFATGATSVFTVLIALTLVNIGISCSKPPLWSMPTLFLSGPAAAAGIATINSIGNLGGFVGPSMIGWIKDTTGSFAGGLYFVAGLLVVSAIVTLVLSRTAPENGGKVAPVQHR</sequence>